<comment type="function">
    <text evidence="1">Is required not only for elongation of protein synthesis but also for the initiation of all mRNA translation through initiator tRNA(fMet) aminoacylation.</text>
</comment>
<comment type="catalytic activity">
    <reaction>
        <text>tRNA(Met) + L-methionine + ATP = L-methionyl-tRNA(Met) + AMP + diphosphate</text>
        <dbReference type="Rhea" id="RHEA:13481"/>
        <dbReference type="Rhea" id="RHEA-COMP:9667"/>
        <dbReference type="Rhea" id="RHEA-COMP:9698"/>
        <dbReference type="ChEBI" id="CHEBI:30616"/>
        <dbReference type="ChEBI" id="CHEBI:33019"/>
        <dbReference type="ChEBI" id="CHEBI:57844"/>
        <dbReference type="ChEBI" id="CHEBI:78442"/>
        <dbReference type="ChEBI" id="CHEBI:78530"/>
        <dbReference type="ChEBI" id="CHEBI:456215"/>
        <dbReference type="EC" id="6.1.1.10"/>
    </reaction>
</comment>
<comment type="subunit">
    <text evidence="1">Homodimer.</text>
</comment>
<comment type="subcellular location">
    <subcellularLocation>
        <location evidence="1">Cytoplasm</location>
    </subcellularLocation>
</comment>
<comment type="similarity">
    <text evidence="3">Belongs to the class-I aminoacyl-tRNA synthetase family. MetG type 2B subfamily.</text>
</comment>
<feature type="chain" id="PRO_0000139209" description="Methionine--tRNA ligase">
    <location>
        <begin position="1"/>
        <end position="660"/>
    </location>
</feature>
<feature type="domain" description="tRNA-binding">
    <location>
        <begin position="560"/>
        <end position="660"/>
    </location>
</feature>
<feature type="region of interest" description="Disordered" evidence="2">
    <location>
        <begin position="535"/>
        <end position="554"/>
    </location>
</feature>
<feature type="short sequence motif" description="'HIGH' region">
    <location>
        <begin position="15"/>
        <end position="25"/>
    </location>
</feature>
<feature type="short sequence motif" description="'KMSKS' region">
    <location>
        <begin position="311"/>
        <end position="315"/>
    </location>
</feature>
<feature type="compositionally biased region" description="Basic and acidic residues" evidence="2">
    <location>
        <begin position="540"/>
        <end position="550"/>
    </location>
</feature>
<feature type="binding site" evidence="1">
    <location>
        <position position="314"/>
    </location>
    <ligand>
        <name>ATP</name>
        <dbReference type="ChEBI" id="CHEBI:30616"/>
    </ligand>
</feature>
<proteinExistence type="inferred from homology"/>
<dbReference type="EC" id="6.1.1.10"/>
<dbReference type="EMBL" id="BA000004">
    <property type="protein sequence ID" value="BAB03772.1"/>
    <property type="molecule type" value="Genomic_DNA"/>
</dbReference>
<dbReference type="PIR" id="E83656">
    <property type="entry name" value="E83656"/>
</dbReference>
<dbReference type="RefSeq" id="WP_010896237.1">
    <property type="nucleotide sequence ID" value="NC_002570.2"/>
</dbReference>
<dbReference type="SMR" id="Q9KGK8"/>
<dbReference type="STRING" id="272558.gene:10725875"/>
<dbReference type="KEGG" id="bha:BH0053"/>
<dbReference type="eggNOG" id="COG0073">
    <property type="taxonomic scope" value="Bacteria"/>
</dbReference>
<dbReference type="eggNOG" id="COG0143">
    <property type="taxonomic scope" value="Bacteria"/>
</dbReference>
<dbReference type="HOGENOM" id="CLU_009710_9_4_9"/>
<dbReference type="OrthoDB" id="9810191at2"/>
<dbReference type="Proteomes" id="UP000001258">
    <property type="component" value="Chromosome"/>
</dbReference>
<dbReference type="GO" id="GO:0005737">
    <property type="term" value="C:cytoplasm"/>
    <property type="evidence" value="ECO:0007669"/>
    <property type="project" value="UniProtKB-SubCell"/>
</dbReference>
<dbReference type="GO" id="GO:0005524">
    <property type="term" value="F:ATP binding"/>
    <property type="evidence" value="ECO:0007669"/>
    <property type="project" value="UniProtKB-UniRule"/>
</dbReference>
<dbReference type="GO" id="GO:0004825">
    <property type="term" value="F:methionine-tRNA ligase activity"/>
    <property type="evidence" value="ECO:0007669"/>
    <property type="project" value="UniProtKB-UniRule"/>
</dbReference>
<dbReference type="GO" id="GO:0000049">
    <property type="term" value="F:tRNA binding"/>
    <property type="evidence" value="ECO:0007669"/>
    <property type="project" value="UniProtKB-KW"/>
</dbReference>
<dbReference type="GO" id="GO:0006431">
    <property type="term" value="P:methionyl-tRNA aminoacylation"/>
    <property type="evidence" value="ECO:0007669"/>
    <property type="project" value="UniProtKB-UniRule"/>
</dbReference>
<dbReference type="CDD" id="cd07957">
    <property type="entry name" value="Anticodon_Ia_Met"/>
    <property type="match status" value="1"/>
</dbReference>
<dbReference type="CDD" id="cd00814">
    <property type="entry name" value="MetRS_core"/>
    <property type="match status" value="1"/>
</dbReference>
<dbReference type="CDD" id="cd02800">
    <property type="entry name" value="tRNA_bind_EcMetRS_like"/>
    <property type="match status" value="1"/>
</dbReference>
<dbReference type="FunFam" id="1.10.730.10:FF:000026">
    <property type="entry name" value="Methionine--tRNA ligase"/>
    <property type="match status" value="1"/>
</dbReference>
<dbReference type="FunFam" id="2.170.220.10:FF:000002">
    <property type="entry name" value="Methionine--tRNA ligase"/>
    <property type="match status" value="1"/>
</dbReference>
<dbReference type="FunFam" id="2.40.50.140:FF:000042">
    <property type="entry name" value="Methionine--tRNA ligase"/>
    <property type="match status" value="1"/>
</dbReference>
<dbReference type="Gene3D" id="2.170.220.10">
    <property type="match status" value="1"/>
</dbReference>
<dbReference type="Gene3D" id="3.40.50.620">
    <property type="entry name" value="HUPs"/>
    <property type="match status" value="1"/>
</dbReference>
<dbReference type="Gene3D" id="1.10.730.10">
    <property type="entry name" value="Isoleucyl-tRNA Synthetase, Domain 1"/>
    <property type="match status" value="1"/>
</dbReference>
<dbReference type="Gene3D" id="2.40.50.140">
    <property type="entry name" value="Nucleic acid-binding proteins"/>
    <property type="match status" value="1"/>
</dbReference>
<dbReference type="HAMAP" id="MF_01228">
    <property type="entry name" value="Met_tRNA_synth_type2"/>
    <property type="match status" value="1"/>
</dbReference>
<dbReference type="InterPro" id="IPR001412">
    <property type="entry name" value="aa-tRNA-synth_I_CS"/>
</dbReference>
<dbReference type="InterPro" id="IPR041872">
    <property type="entry name" value="Anticodon_Met"/>
</dbReference>
<dbReference type="InterPro" id="IPR013155">
    <property type="entry name" value="M/V/L/I-tRNA-synth_anticd-bd"/>
</dbReference>
<dbReference type="InterPro" id="IPR004495">
    <property type="entry name" value="Met-tRNA-synth_bsu_C"/>
</dbReference>
<dbReference type="InterPro" id="IPR014758">
    <property type="entry name" value="Met-tRNA_synth"/>
</dbReference>
<dbReference type="InterPro" id="IPR023457">
    <property type="entry name" value="Met-tRNA_synth_2"/>
</dbReference>
<dbReference type="InterPro" id="IPR015413">
    <property type="entry name" value="Methionyl/Leucyl_tRNA_Synth"/>
</dbReference>
<dbReference type="InterPro" id="IPR033911">
    <property type="entry name" value="MetRS_core"/>
</dbReference>
<dbReference type="InterPro" id="IPR012340">
    <property type="entry name" value="NA-bd_OB-fold"/>
</dbReference>
<dbReference type="InterPro" id="IPR014729">
    <property type="entry name" value="Rossmann-like_a/b/a_fold"/>
</dbReference>
<dbReference type="InterPro" id="IPR002547">
    <property type="entry name" value="tRNA-bd_dom"/>
</dbReference>
<dbReference type="InterPro" id="IPR009080">
    <property type="entry name" value="tRNAsynth_Ia_anticodon-bd"/>
</dbReference>
<dbReference type="NCBIfam" id="TIGR00398">
    <property type="entry name" value="metG"/>
    <property type="match status" value="1"/>
</dbReference>
<dbReference type="NCBIfam" id="TIGR00399">
    <property type="entry name" value="metG_C_term"/>
    <property type="match status" value="1"/>
</dbReference>
<dbReference type="NCBIfam" id="NF008900">
    <property type="entry name" value="PRK12267.1"/>
    <property type="match status" value="1"/>
</dbReference>
<dbReference type="PANTHER" id="PTHR43326:SF1">
    <property type="entry name" value="METHIONINE--TRNA LIGASE, MITOCHONDRIAL"/>
    <property type="match status" value="1"/>
</dbReference>
<dbReference type="PANTHER" id="PTHR43326">
    <property type="entry name" value="METHIONYL-TRNA SYNTHETASE"/>
    <property type="match status" value="1"/>
</dbReference>
<dbReference type="Pfam" id="PF08264">
    <property type="entry name" value="Anticodon_1"/>
    <property type="match status" value="1"/>
</dbReference>
<dbReference type="Pfam" id="PF09334">
    <property type="entry name" value="tRNA-synt_1g"/>
    <property type="match status" value="1"/>
</dbReference>
<dbReference type="Pfam" id="PF01588">
    <property type="entry name" value="tRNA_bind"/>
    <property type="match status" value="1"/>
</dbReference>
<dbReference type="PRINTS" id="PR01041">
    <property type="entry name" value="TRNASYNTHMET"/>
</dbReference>
<dbReference type="SUPFAM" id="SSF47323">
    <property type="entry name" value="Anticodon-binding domain of a subclass of class I aminoacyl-tRNA synthetases"/>
    <property type="match status" value="1"/>
</dbReference>
<dbReference type="SUPFAM" id="SSF50249">
    <property type="entry name" value="Nucleic acid-binding proteins"/>
    <property type="match status" value="1"/>
</dbReference>
<dbReference type="SUPFAM" id="SSF52374">
    <property type="entry name" value="Nucleotidylyl transferase"/>
    <property type="match status" value="1"/>
</dbReference>
<dbReference type="PROSITE" id="PS00178">
    <property type="entry name" value="AA_TRNA_LIGASE_I"/>
    <property type="match status" value="1"/>
</dbReference>
<dbReference type="PROSITE" id="PS50886">
    <property type="entry name" value="TRBD"/>
    <property type="match status" value="1"/>
</dbReference>
<protein>
    <recommendedName>
        <fullName>Methionine--tRNA ligase</fullName>
        <ecNumber>6.1.1.10</ecNumber>
    </recommendedName>
    <alternativeName>
        <fullName>Methionyl-tRNA synthetase</fullName>
        <shortName>MetRS</shortName>
    </alternativeName>
</protein>
<name>SYM_HALH5</name>
<evidence type="ECO:0000250" key="1"/>
<evidence type="ECO:0000256" key="2">
    <source>
        <dbReference type="SAM" id="MobiDB-lite"/>
    </source>
</evidence>
<evidence type="ECO:0000305" key="3"/>
<reference key="1">
    <citation type="journal article" date="2000" name="Nucleic Acids Res.">
        <title>Complete genome sequence of the alkaliphilic bacterium Bacillus halodurans and genomic sequence comparison with Bacillus subtilis.</title>
        <authorList>
            <person name="Takami H."/>
            <person name="Nakasone K."/>
            <person name="Takaki Y."/>
            <person name="Maeno G."/>
            <person name="Sasaki R."/>
            <person name="Masui N."/>
            <person name="Fuji F."/>
            <person name="Hirama C."/>
            <person name="Nakamura Y."/>
            <person name="Ogasawara N."/>
            <person name="Kuhara S."/>
            <person name="Horikoshi K."/>
        </authorList>
    </citation>
    <scope>NUCLEOTIDE SEQUENCE [LARGE SCALE GENOMIC DNA]</scope>
    <source>
        <strain>ATCC BAA-125 / DSM 18197 / FERM 7344 / JCM 9153 / C-125</strain>
    </source>
</reference>
<gene>
    <name type="primary">metG</name>
    <name type="synonym">metS</name>
    <name type="ordered locus">BH0053</name>
</gene>
<keyword id="KW-0030">Aminoacyl-tRNA synthetase</keyword>
<keyword id="KW-0067">ATP-binding</keyword>
<keyword id="KW-0963">Cytoplasm</keyword>
<keyword id="KW-0436">Ligase</keyword>
<keyword id="KW-0547">Nucleotide-binding</keyword>
<keyword id="KW-0648">Protein biosynthesis</keyword>
<keyword id="KW-1185">Reference proteome</keyword>
<keyword id="KW-0694">RNA-binding</keyword>
<keyword id="KW-0820">tRNA-binding</keyword>
<sequence length="660" mass="75192">MSKEQKTFYLTTPIYYPSDKLHIGHAYTTVAGDAMARYKRLRGYNVMYLTGTDEHGQKIEQKAEAKGLTPKQFVDEIVSGIQDLWKKLDISYDDFIRTTEERHIKVVQQIFEQLLDQGDIYLGDYEGWYSIPDETFYTETQLVDKEYDADGNLIGGKSPDSGHPVEKVREQSYFFRMSKYADRLLQFYEENPQFIQPESRKNEMINNFIKPGLEDLAVSRTSFTWGVPVPRDPKHVVYVWIDALSNYITALGYGSDQQEKYENYWPADVHLVGKEIVRFHTIYWPIMLMALDLPLPKKVFGHGWLLMKDGKMSKSKGNVVDPVPLIDRYGLDALRYYLLREVPFGSDGVFTPEAFVERVNYDLANDLGNLLNRTVAMIEKYFDGKIPSYVKDGTPFDADLVELVYSTVKKVEDAMEEMEFSIALTAIGQLISRTNKYIDETQPWVLAKDESKREQLGAAMYHLAESIRYVSVLLQPFMTKAPQKIWEQLGIDSSLTTWESLETFGQIPGNTNVQKGQPLFPRLDVEEEVAHIKSLMGGSKKPEEAPKDEKEESDEITIDDFSKVELRIAEVIDAEPVKKADRLLKIQLDLGYEKRQVVSGIAKYYSPSDLIGKKVICVTNLKPVKLRGELSQGMILAGSEGDQLRLATVDGALPNGSLVK</sequence>
<accession>Q9KGK8</accession>
<organism>
    <name type="scientific">Halalkalibacterium halodurans (strain ATCC BAA-125 / DSM 18197 / FERM 7344 / JCM 9153 / C-125)</name>
    <name type="common">Bacillus halodurans</name>
    <dbReference type="NCBI Taxonomy" id="272558"/>
    <lineage>
        <taxon>Bacteria</taxon>
        <taxon>Bacillati</taxon>
        <taxon>Bacillota</taxon>
        <taxon>Bacilli</taxon>
        <taxon>Bacillales</taxon>
        <taxon>Bacillaceae</taxon>
        <taxon>Halalkalibacterium (ex Joshi et al. 2022)</taxon>
    </lineage>
</organism>